<gene>
    <name evidence="1" type="primary">pyrG</name>
    <name type="ordered locus">Ta0044</name>
</gene>
<protein>
    <recommendedName>
        <fullName evidence="1">CTP synthase</fullName>
        <ecNumber evidence="1">6.3.4.2</ecNumber>
    </recommendedName>
    <alternativeName>
        <fullName evidence="1">Cytidine 5'-triphosphate synthase</fullName>
    </alternativeName>
    <alternativeName>
        <fullName evidence="1">Cytidine triphosphate synthetase</fullName>
        <shortName evidence="1">CTP synthetase</shortName>
        <shortName evidence="1">CTPS</shortName>
    </alternativeName>
    <alternativeName>
        <fullName evidence="1">UTP--ammonia ligase</fullName>
    </alternativeName>
</protein>
<proteinExistence type="inferred from homology"/>
<organism>
    <name type="scientific">Thermoplasma acidophilum (strain ATCC 25905 / DSM 1728 / JCM 9062 / NBRC 15155 / AMRC-C165)</name>
    <dbReference type="NCBI Taxonomy" id="273075"/>
    <lineage>
        <taxon>Archaea</taxon>
        <taxon>Methanobacteriati</taxon>
        <taxon>Thermoplasmatota</taxon>
        <taxon>Thermoplasmata</taxon>
        <taxon>Thermoplasmatales</taxon>
        <taxon>Thermoplasmataceae</taxon>
        <taxon>Thermoplasma</taxon>
    </lineage>
</organism>
<sequence>MQYIVVTGGVISGLGKGTITSSIGHILKDSGIKVSAVKIDPYINYDAGTMNPYQHGEVFVLDDGGEVDLDLGNYERFMNINLSRDNNITTGKVYLEVIQKERHGDYLGKTVQIIPHITDEIKRRIREVARTSGADVVLIEVGGTVGDIESMPFLEALRQLKREEQNVVFAHVTLVPEIGPTMEQKTKPTQHSVKALREIGIQPDIIFARSKQKLTEETKSRISLFTDVPVEGIISVSDVENVYLLPQMMVNEGLITRLSKLLNMNIEYRDSWTSYAENIRHPRDRVKVAIVGKYVDLHDAYISHKEAFSHVTGNTGIAVDIMWIDSEKVKNDQSVLSEADAILIPGGFGYRGVEGKIAATRYAMENGVPFLGICLGFQVAVIAVARYVLGLDGANSTEFDEKTKYPVVDILPEQRGVKDMGGTMRLGSKKVVIKKGTLAHRIYGADVIYERHRHRYEVNPDYIDMIEKAGFKFSATDEEGIRMEILERPGDESFIATQYHSEFKSRPLDPSKVHLHLVEQALIFKHRRMGENHEGYATAASSQGQ</sequence>
<comment type="function">
    <text evidence="1">Catalyzes the ATP-dependent amination of UTP to CTP with either L-glutamine or ammonia as the source of nitrogen. Regulates intracellular CTP levels through interactions with the four ribonucleotide triphosphates.</text>
</comment>
<comment type="catalytic activity">
    <reaction evidence="1">
        <text>UTP + L-glutamine + ATP + H2O = CTP + L-glutamate + ADP + phosphate + 2 H(+)</text>
        <dbReference type="Rhea" id="RHEA:26426"/>
        <dbReference type="ChEBI" id="CHEBI:15377"/>
        <dbReference type="ChEBI" id="CHEBI:15378"/>
        <dbReference type="ChEBI" id="CHEBI:29985"/>
        <dbReference type="ChEBI" id="CHEBI:30616"/>
        <dbReference type="ChEBI" id="CHEBI:37563"/>
        <dbReference type="ChEBI" id="CHEBI:43474"/>
        <dbReference type="ChEBI" id="CHEBI:46398"/>
        <dbReference type="ChEBI" id="CHEBI:58359"/>
        <dbReference type="ChEBI" id="CHEBI:456216"/>
        <dbReference type="EC" id="6.3.4.2"/>
    </reaction>
</comment>
<comment type="catalytic activity">
    <reaction evidence="1">
        <text>L-glutamine + H2O = L-glutamate + NH4(+)</text>
        <dbReference type="Rhea" id="RHEA:15889"/>
        <dbReference type="ChEBI" id="CHEBI:15377"/>
        <dbReference type="ChEBI" id="CHEBI:28938"/>
        <dbReference type="ChEBI" id="CHEBI:29985"/>
        <dbReference type="ChEBI" id="CHEBI:58359"/>
    </reaction>
</comment>
<comment type="catalytic activity">
    <reaction evidence="1">
        <text>UTP + NH4(+) + ATP = CTP + ADP + phosphate + 2 H(+)</text>
        <dbReference type="Rhea" id="RHEA:16597"/>
        <dbReference type="ChEBI" id="CHEBI:15378"/>
        <dbReference type="ChEBI" id="CHEBI:28938"/>
        <dbReference type="ChEBI" id="CHEBI:30616"/>
        <dbReference type="ChEBI" id="CHEBI:37563"/>
        <dbReference type="ChEBI" id="CHEBI:43474"/>
        <dbReference type="ChEBI" id="CHEBI:46398"/>
        <dbReference type="ChEBI" id="CHEBI:456216"/>
    </reaction>
</comment>
<comment type="activity regulation">
    <text evidence="1">Allosterically activated by GTP, when glutamine is the substrate; GTP has no effect on the reaction when ammonia is the substrate. The allosteric effector GTP functions by stabilizing the protein conformation that binds the tetrahedral intermediate(s) formed during glutamine hydrolysis. Inhibited by the product CTP, via allosteric rather than competitive inhibition.</text>
</comment>
<comment type="pathway">
    <text evidence="1">Pyrimidine metabolism; CTP biosynthesis via de novo pathway; CTP from UDP: step 2/2.</text>
</comment>
<comment type="subunit">
    <text evidence="1">Homotetramer.</text>
</comment>
<comment type="miscellaneous">
    <text evidence="1">CTPSs have evolved a hybrid strategy for distinguishing between UTP and CTP. The overlapping regions of the product feedback inhibitory and substrate sites recognize a common feature in both compounds, the triphosphate moiety. To differentiate isosteric substrate and product pyrimidine rings, an additional pocket far from the expected kinase/ligase catalytic site, specifically recognizes the cytosine and ribose portions of the product inhibitor.</text>
</comment>
<comment type="similarity">
    <text evidence="1">Belongs to the CTP synthase family.</text>
</comment>
<comment type="sequence caution" evidence="2">
    <conflict type="erroneous initiation">
        <sequence resource="EMBL-CDS" id="CAC11192"/>
    </conflict>
</comment>
<keyword id="KW-0067">ATP-binding</keyword>
<keyword id="KW-0315">Glutamine amidotransferase</keyword>
<keyword id="KW-0436">Ligase</keyword>
<keyword id="KW-0460">Magnesium</keyword>
<keyword id="KW-0479">Metal-binding</keyword>
<keyword id="KW-0547">Nucleotide-binding</keyword>
<keyword id="KW-0665">Pyrimidine biosynthesis</keyword>
<keyword id="KW-1185">Reference proteome</keyword>
<reference key="1">
    <citation type="journal article" date="2000" name="Nature">
        <title>The genome sequence of the thermoacidophilic scavenger Thermoplasma acidophilum.</title>
        <authorList>
            <person name="Ruepp A."/>
            <person name="Graml W."/>
            <person name="Santos-Martinez M.-L."/>
            <person name="Koretke K.K."/>
            <person name="Volker C."/>
            <person name="Mewes H.-W."/>
            <person name="Frishman D."/>
            <person name="Stocker S."/>
            <person name="Lupas A.N."/>
            <person name="Baumeister W."/>
        </authorList>
    </citation>
    <scope>NUCLEOTIDE SEQUENCE [LARGE SCALE GENOMIC DNA]</scope>
    <source>
        <strain>ATCC 25905 / DSM 1728 / JCM 9062 / NBRC 15155 / AMRC-C165</strain>
    </source>
</reference>
<evidence type="ECO:0000255" key="1">
    <source>
        <dbReference type="HAMAP-Rule" id="MF_01227"/>
    </source>
</evidence>
<evidence type="ECO:0000305" key="2"/>
<dbReference type="EC" id="6.3.4.2" evidence="1"/>
<dbReference type="EMBL" id="AL445063">
    <property type="protein sequence ID" value="CAC11192.1"/>
    <property type="status" value="ALT_INIT"/>
    <property type="molecule type" value="Genomic_DNA"/>
</dbReference>
<dbReference type="RefSeq" id="WP_010900472.1">
    <property type="nucleotide sequence ID" value="NC_002578.1"/>
</dbReference>
<dbReference type="SMR" id="Q9HM27"/>
<dbReference type="FunCoup" id="Q9HM27">
    <property type="interactions" value="183"/>
</dbReference>
<dbReference type="STRING" id="273075.gene:9571259"/>
<dbReference type="MEROPS" id="C26.964"/>
<dbReference type="PaxDb" id="273075-Ta0044m"/>
<dbReference type="DNASU" id="1456961"/>
<dbReference type="EnsemblBacteria" id="CAC11192">
    <property type="protein sequence ID" value="CAC11192"/>
    <property type="gene ID" value="CAC11192"/>
</dbReference>
<dbReference type="KEGG" id="tac:Ta0044"/>
<dbReference type="eggNOG" id="arCOG00063">
    <property type="taxonomic scope" value="Archaea"/>
</dbReference>
<dbReference type="HOGENOM" id="CLU_011675_5_0_2"/>
<dbReference type="InParanoid" id="Q9HM27"/>
<dbReference type="OrthoDB" id="52769at2157"/>
<dbReference type="UniPathway" id="UPA00159">
    <property type="reaction ID" value="UER00277"/>
</dbReference>
<dbReference type="Proteomes" id="UP000001024">
    <property type="component" value="Chromosome"/>
</dbReference>
<dbReference type="GO" id="GO:0005524">
    <property type="term" value="F:ATP binding"/>
    <property type="evidence" value="ECO:0007669"/>
    <property type="project" value="UniProtKB-KW"/>
</dbReference>
<dbReference type="GO" id="GO:0003883">
    <property type="term" value="F:CTP synthase activity"/>
    <property type="evidence" value="ECO:0007669"/>
    <property type="project" value="UniProtKB-UniRule"/>
</dbReference>
<dbReference type="GO" id="GO:0004359">
    <property type="term" value="F:glutaminase activity"/>
    <property type="evidence" value="ECO:0007669"/>
    <property type="project" value="RHEA"/>
</dbReference>
<dbReference type="GO" id="GO:0042802">
    <property type="term" value="F:identical protein binding"/>
    <property type="evidence" value="ECO:0007669"/>
    <property type="project" value="TreeGrafter"/>
</dbReference>
<dbReference type="GO" id="GO:0046872">
    <property type="term" value="F:metal ion binding"/>
    <property type="evidence" value="ECO:0007669"/>
    <property type="project" value="UniProtKB-KW"/>
</dbReference>
<dbReference type="GO" id="GO:0044210">
    <property type="term" value="P:'de novo' CTP biosynthetic process"/>
    <property type="evidence" value="ECO:0007669"/>
    <property type="project" value="UniProtKB-UniRule"/>
</dbReference>
<dbReference type="GO" id="GO:0019856">
    <property type="term" value="P:pyrimidine nucleobase biosynthetic process"/>
    <property type="evidence" value="ECO:0007669"/>
    <property type="project" value="TreeGrafter"/>
</dbReference>
<dbReference type="CDD" id="cd03113">
    <property type="entry name" value="CTPS_N"/>
    <property type="match status" value="1"/>
</dbReference>
<dbReference type="CDD" id="cd01746">
    <property type="entry name" value="GATase1_CTP_Synthase"/>
    <property type="match status" value="1"/>
</dbReference>
<dbReference type="FunFam" id="3.40.50.300:FF:000009">
    <property type="entry name" value="CTP synthase"/>
    <property type="match status" value="1"/>
</dbReference>
<dbReference type="FunFam" id="3.40.50.880:FF:000002">
    <property type="entry name" value="CTP synthase"/>
    <property type="match status" value="1"/>
</dbReference>
<dbReference type="Gene3D" id="3.40.50.880">
    <property type="match status" value="1"/>
</dbReference>
<dbReference type="Gene3D" id="3.40.50.300">
    <property type="entry name" value="P-loop containing nucleotide triphosphate hydrolases"/>
    <property type="match status" value="1"/>
</dbReference>
<dbReference type="HAMAP" id="MF_01227">
    <property type="entry name" value="PyrG"/>
    <property type="match status" value="1"/>
</dbReference>
<dbReference type="InterPro" id="IPR029062">
    <property type="entry name" value="Class_I_gatase-like"/>
</dbReference>
<dbReference type="InterPro" id="IPR004468">
    <property type="entry name" value="CTP_synthase"/>
</dbReference>
<dbReference type="InterPro" id="IPR017456">
    <property type="entry name" value="CTP_synthase_N"/>
</dbReference>
<dbReference type="InterPro" id="IPR017926">
    <property type="entry name" value="GATASE"/>
</dbReference>
<dbReference type="InterPro" id="IPR033828">
    <property type="entry name" value="GATase1_CTP_Synthase"/>
</dbReference>
<dbReference type="InterPro" id="IPR027417">
    <property type="entry name" value="P-loop_NTPase"/>
</dbReference>
<dbReference type="NCBIfam" id="NF003792">
    <property type="entry name" value="PRK05380.1"/>
    <property type="match status" value="1"/>
</dbReference>
<dbReference type="NCBIfam" id="TIGR00337">
    <property type="entry name" value="PyrG"/>
    <property type="match status" value="1"/>
</dbReference>
<dbReference type="PANTHER" id="PTHR11550">
    <property type="entry name" value="CTP SYNTHASE"/>
    <property type="match status" value="1"/>
</dbReference>
<dbReference type="PANTHER" id="PTHR11550:SF0">
    <property type="entry name" value="CTP SYNTHASE-RELATED"/>
    <property type="match status" value="1"/>
</dbReference>
<dbReference type="Pfam" id="PF06418">
    <property type="entry name" value="CTP_synth_N"/>
    <property type="match status" value="1"/>
</dbReference>
<dbReference type="Pfam" id="PF00117">
    <property type="entry name" value="GATase"/>
    <property type="match status" value="1"/>
</dbReference>
<dbReference type="SUPFAM" id="SSF52317">
    <property type="entry name" value="Class I glutamine amidotransferase-like"/>
    <property type="match status" value="1"/>
</dbReference>
<dbReference type="SUPFAM" id="SSF52540">
    <property type="entry name" value="P-loop containing nucleoside triphosphate hydrolases"/>
    <property type="match status" value="1"/>
</dbReference>
<dbReference type="PROSITE" id="PS51273">
    <property type="entry name" value="GATASE_TYPE_1"/>
    <property type="match status" value="1"/>
</dbReference>
<name>PYRG_THEAC</name>
<accession>Q9HM27</accession>
<feature type="chain" id="PRO_0000138272" description="CTP synthase">
    <location>
        <begin position="1"/>
        <end position="545"/>
    </location>
</feature>
<feature type="domain" description="Glutamine amidotransferase type-1" evidence="1">
    <location>
        <begin position="294"/>
        <end position="527"/>
    </location>
</feature>
<feature type="region of interest" description="Amidoligase domain" evidence="1">
    <location>
        <begin position="1"/>
        <end position="264"/>
    </location>
</feature>
<feature type="active site" description="Nucleophile; for glutamine hydrolysis" evidence="1">
    <location>
        <position position="374"/>
    </location>
</feature>
<feature type="active site" evidence="1">
    <location>
        <position position="500"/>
    </location>
</feature>
<feature type="active site" evidence="1">
    <location>
        <position position="502"/>
    </location>
</feature>
<feature type="binding site" evidence="1">
    <location>
        <position position="12"/>
    </location>
    <ligand>
        <name>CTP</name>
        <dbReference type="ChEBI" id="CHEBI:37563"/>
        <note>allosteric inhibitor</note>
    </ligand>
</feature>
<feature type="binding site" evidence="1">
    <location>
        <position position="12"/>
    </location>
    <ligand>
        <name>UTP</name>
        <dbReference type="ChEBI" id="CHEBI:46398"/>
    </ligand>
</feature>
<feature type="binding site" evidence="1">
    <location>
        <begin position="13"/>
        <end position="18"/>
    </location>
    <ligand>
        <name>ATP</name>
        <dbReference type="ChEBI" id="CHEBI:30616"/>
    </ligand>
</feature>
<feature type="binding site" evidence="1">
    <location>
        <position position="53"/>
    </location>
    <ligand>
        <name>L-glutamine</name>
        <dbReference type="ChEBI" id="CHEBI:58359"/>
    </ligand>
</feature>
<feature type="binding site" evidence="1">
    <location>
        <position position="70"/>
    </location>
    <ligand>
        <name>ATP</name>
        <dbReference type="ChEBI" id="CHEBI:30616"/>
    </ligand>
</feature>
<feature type="binding site" evidence="1">
    <location>
        <position position="70"/>
    </location>
    <ligand>
        <name>Mg(2+)</name>
        <dbReference type="ChEBI" id="CHEBI:18420"/>
    </ligand>
</feature>
<feature type="binding site" evidence="1">
    <location>
        <position position="140"/>
    </location>
    <ligand>
        <name>Mg(2+)</name>
        <dbReference type="ChEBI" id="CHEBI:18420"/>
    </ligand>
</feature>
<feature type="binding site" evidence="1">
    <location>
        <begin position="147"/>
        <end position="149"/>
    </location>
    <ligand>
        <name>CTP</name>
        <dbReference type="ChEBI" id="CHEBI:37563"/>
        <note>allosteric inhibitor</note>
    </ligand>
</feature>
<feature type="binding site" evidence="1">
    <location>
        <begin position="185"/>
        <end position="190"/>
    </location>
    <ligand>
        <name>CTP</name>
        <dbReference type="ChEBI" id="CHEBI:37563"/>
        <note>allosteric inhibitor</note>
    </ligand>
</feature>
<feature type="binding site" evidence="1">
    <location>
        <begin position="185"/>
        <end position="190"/>
    </location>
    <ligand>
        <name>UTP</name>
        <dbReference type="ChEBI" id="CHEBI:46398"/>
    </ligand>
</feature>
<feature type="binding site" evidence="1">
    <location>
        <position position="221"/>
    </location>
    <ligand>
        <name>CTP</name>
        <dbReference type="ChEBI" id="CHEBI:37563"/>
        <note>allosteric inhibitor</note>
    </ligand>
</feature>
<feature type="binding site" evidence="1">
    <location>
        <position position="221"/>
    </location>
    <ligand>
        <name>UTP</name>
        <dbReference type="ChEBI" id="CHEBI:46398"/>
    </ligand>
</feature>
<feature type="binding site" evidence="1">
    <location>
        <position position="347"/>
    </location>
    <ligand>
        <name>L-glutamine</name>
        <dbReference type="ChEBI" id="CHEBI:58359"/>
    </ligand>
</feature>
<feature type="binding site" evidence="1">
    <location>
        <begin position="375"/>
        <end position="378"/>
    </location>
    <ligand>
        <name>L-glutamine</name>
        <dbReference type="ChEBI" id="CHEBI:58359"/>
    </ligand>
</feature>
<feature type="binding site" evidence="1">
    <location>
        <position position="398"/>
    </location>
    <ligand>
        <name>L-glutamine</name>
        <dbReference type="ChEBI" id="CHEBI:58359"/>
    </ligand>
</feature>
<feature type="binding site" evidence="1">
    <location>
        <position position="455"/>
    </location>
    <ligand>
        <name>L-glutamine</name>
        <dbReference type="ChEBI" id="CHEBI:58359"/>
    </ligand>
</feature>